<protein>
    <recommendedName>
        <fullName evidence="1">tRNA-specific 2-thiouridylase MnmA</fullName>
        <ecNumber evidence="1">2.8.1.13</ecNumber>
    </recommendedName>
</protein>
<name>MNMA_RHIR8</name>
<dbReference type="EC" id="2.8.1.13" evidence="1"/>
<dbReference type="EMBL" id="CP000628">
    <property type="protein sequence ID" value="ACM27559.1"/>
    <property type="molecule type" value="Genomic_DNA"/>
</dbReference>
<dbReference type="RefSeq" id="WP_012652237.1">
    <property type="nucleotide sequence ID" value="NC_011985.1"/>
</dbReference>
<dbReference type="SMR" id="B9J9F7"/>
<dbReference type="STRING" id="311403.Arad_3657"/>
<dbReference type="GeneID" id="86849416"/>
<dbReference type="KEGG" id="ara:Arad_3657"/>
<dbReference type="eggNOG" id="COG0482">
    <property type="taxonomic scope" value="Bacteria"/>
</dbReference>
<dbReference type="HOGENOM" id="CLU_035188_0_1_5"/>
<dbReference type="Proteomes" id="UP000001600">
    <property type="component" value="Chromosome 1"/>
</dbReference>
<dbReference type="GO" id="GO:0005737">
    <property type="term" value="C:cytoplasm"/>
    <property type="evidence" value="ECO:0007669"/>
    <property type="project" value="UniProtKB-SubCell"/>
</dbReference>
<dbReference type="GO" id="GO:0005524">
    <property type="term" value="F:ATP binding"/>
    <property type="evidence" value="ECO:0007669"/>
    <property type="project" value="UniProtKB-KW"/>
</dbReference>
<dbReference type="GO" id="GO:0000049">
    <property type="term" value="F:tRNA binding"/>
    <property type="evidence" value="ECO:0007669"/>
    <property type="project" value="UniProtKB-KW"/>
</dbReference>
<dbReference type="GO" id="GO:0103016">
    <property type="term" value="F:tRNA-uridine 2-sulfurtransferase activity"/>
    <property type="evidence" value="ECO:0007669"/>
    <property type="project" value="UniProtKB-EC"/>
</dbReference>
<dbReference type="GO" id="GO:0002143">
    <property type="term" value="P:tRNA wobble position uridine thiolation"/>
    <property type="evidence" value="ECO:0007669"/>
    <property type="project" value="TreeGrafter"/>
</dbReference>
<dbReference type="CDD" id="cd01998">
    <property type="entry name" value="MnmA_TRMU-like"/>
    <property type="match status" value="1"/>
</dbReference>
<dbReference type="FunFam" id="3.40.50.620:FF:000115">
    <property type="entry name" value="tRNA-specific 2-thiouridylase MnmA"/>
    <property type="match status" value="1"/>
</dbReference>
<dbReference type="Gene3D" id="2.30.30.280">
    <property type="entry name" value="Adenine nucleotide alpha hydrolases-like domains"/>
    <property type="match status" value="1"/>
</dbReference>
<dbReference type="Gene3D" id="3.40.50.620">
    <property type="entry name" value="HUPs"/>
    <property type="match status" value="1"/>
</dbReference>
<dbReference type="Gene3D" id="2.40.30.10">
    <property type="entry name" value="Translation factors"/>
    <property type="match status" value="1"/>
</dbReference>
<dbReference type="HAMAP" id="MF_00144">
    <property type="entry name" value="tRNA_thiouridyl_MnmA"/>
    <property type="match status" value="1"/>
</dbReference>
<dbReference type="InterPro" id="IPR004506">
    <property type="entry name" value="MnmA-like"/>
</dbReference>
<dbReference type="InterPro" id="IPR046885">
    <property type="entry name" value="MnmA-like_C"/>
</dbReference>
<dbReference type="InterPro" id="IPR046884">
    <property type="entry name" value="MnmA-like_central"/>
</dbReference>
<dbReference type="InterPro" id="IPR023382">
    <property type="entry name" value="MnmA-like_central_sf"/>
</dbReference>
<dbReference type="InterPro" id="IPR014729">
    <property type="entry name" value="Rossmann-like_a/b/a_fold"/>
</dbReference>
<dbReference type="NCBIfam" id="NF001138">
    <property type="entry name" value="PRK00143.1"/>
    <property type="match status" value="1"/>
</dbReference>
<dbReference type="NCBIfam" id="TIGR00420">
    <property type="entry name" value="trmU"/>
    <property type="match status" value="1"/>
</dbReference>
<dbReference type="PANTHER" id="PTHR11933:SF5">
    <property type="entry name" value="MITOCHONDRIAL TRNA-SPECIFIC 2-THIOURIDYLASE 1"/>
    <property type="match status" value="1"/>
</dbReference>
<dbReference type="PANTHER" id="PTHR11933">
    <property type="entry name" value="TRNA 5-METHYLAMINOMETHYL-2-THIOURIDYLATE -METHYLTRANSFERASE"/>
    <property type="match status" value="1"/>
</dbReference>
<dbReference type="Pfam" id="PF03054">
    <property type="entry name" value="tRNA_Me_trans"/>
    <property type="match status" value="1"/>
</dbReference>
<dbReference type="Pfam" id="PF20258">
    <property type="entry name" value="tRNA_Me_trans_C"/>
    <property type="match status" value="1"/>
</dbReference>
<dbReference type="Pfam" id="PF20259">
    <property type="entry name" value="tRNA_Me_trans_M"/>
    <property type="match status" value="1"/>
</dbReference>
<dbReference type="SUPFAM" id="SSF52402">
    <property type="entry name" value="Adenine nucleotide alpha hydrolases-like"/>
    <property type="match status" value="1"/>
</dbReference>
<accession>B9J9F7</accession>
<sequence length="399" mass="43148">MNTLDFDKKPEDTRVVVAMSGGVDSSVVAGILKRQGYDVLGITLQLYDHGAAVHRAGSCCAGQDIDDARRVCETIGIPHYVLDYEKRFRETVINPFAESYVAGETPIPCVSCNQTVKFADLLATAKELGADALATGHYIRSRPNPSADHPGRRALYRPADADRDQSYFLFATTQEQIDYLRFPLGGMPKAETRALAEEMGLVVAKKADSQDICFVPQGKYSDVIAKLKPNAALAGEIVHLDGRVLGRHEGILHYTIGQRRGIGVATGDPLYVVFLDARSRRVIVGPKEALETHRVYLRDVNWLGDEPLLEAASGEGFACYAKVRSTRPPEPAVLRADKDGIYVDLTIGEAGVAPGQACALYSAPGDDARVYGGGFIERSEREPMAEASLKALLASPVAA</sequence>
<proteinExistence type="inferred from homology"/>
<organism>
    <name type="scientific">Rhizobium rhizogenes (strain K84 / ATCC BAA-868)</name>
    <name type="common">Agrobacterium radiobacter</name>
    <dbReference type="NCBI Taxonomy" id="311403"/>
    <lineage>
        <taxon>Bacteria</taxon>
        <taxon>Pseudomonadati</taxon>
        <taxon>Pseudomonadota</taxon>
        <taxon>Alphaproteobacteria</taxon>
        <taxon>Hyphomicrobiales</taxon>
        <taxon>Rhizobiaceae</taxon>
        <taxon>Rhizobium/Agrobacterium group</taxon>
        <taxon>Rhizobium</taxon>
    </lineage>
</organism>
<comment type="function">
    <text evidence="1">Catalyzes the 2-thiolation of uridine at the wobble position (U34) of tRNA, leading to the formation of s(2)U34.</text>
</comment>
<comment type="catalytic activity">
    <reaction evidence="1">
        <text>S-sulfanyl-L-cysteinyl-[protein] + uridine(34) in tRNA + AH2 + ATP = 2-thiouridine(34) in tRNA + L-cysteinyl-[protein] + A + AMP + diphosphate + H(+)</text>
        <dbReference type="Rhea" id="RHEA:47032"/>
        <dbReference type="Rhea" id="RHEA-COMP:10131"/>
        <dbReference type="Rhea" id="RHEA-COMP:11726"/>
        <dbReference type="Rhea" id="RHEA-COMP:11727"/>
        <dbReference type="Rhea" id="RHEA-COMP:11728"/>
        <dbReference type="ChEBI" id="CHEBI:13193"/>
        <dbReference type="ChEBI" id="CHEBI:15378"/>
        <dbReference type="ChEBI" id="CHEBI:17499"/>
        <dbReference type="ChEBI" id="CHEBI:29950"/>
        <dbReference type="ChEBI" id="CHEBI:30616"/>
        <dbReference type="ChEBI" id="CHEBI:33019"/>
        <dbReference type="ChEBI" id="CHEBI:61963"/>
        <dbReference type="ChEBI" id="CHEBI:65315"/>
        <dbReference type="ChEBI" id="CHEBI:87170"/>
        <dbReference type="ChEBI" id="CHEBI:456215"/>
        <dbReference type="EC" id="2.8.1.13"/>
    </reaction>
</comment>
<comment type="subcellular location">
    <subcellularLocation>
        <location evidence="1">Cytoplasm</location>
    </subcellularLocation>
</comment>
<comment type="similarity">
    <text evidence="1">Belongs to the MnmA/TRMU family.</text>
</comment>
<evidence type="ECO:0000255" key="1">
    <source>
        <dbReference type="HAMAP-Rule" id="MF_00144"/>
    </source>
</evidence>
<feature type="chain" id="PRO_1000198599" description="tRNA-specific 2-thiouridylase MnmA">
    <location>
        <begin position="1"/>
        <end position="399"/>
    </location>
</feature>
<feature type="region of interest" description="Interaction with tRNA" evidence="1">
    <location>
        <begin position="163"/>
        <end position="165"/>
    </location>
</feature>
<feature type="active site" description="Nucleophile" evidence="1">
    <location>
        <position position="112"/>
    </location>
</feature>
<feature type="active site" description="Cysteine persulfide intermediate" evidence="1">
    <location>
        <position position="213"/>
    </location>
</feature>
<feature type="binding site" evidence="1">
    <location>
        <begin position="18"/>
        <end position="25"/>
    </location>
    <ligand>
        <name>ATP</name>
        <dbReference type="ChEBI" id="CHEBI:30616"/>
    </ligand>
</feature>
<feature type="binding site" evidence="1">
    <location>
        <position position="44"/>
    </location>
    <ligand>
        <name>ATP</name>
        <dbReference type="ChEBI" id="CHEBI:30616"/>
    </ligand>
</feature>
<feature type="binding site" evidence="1">
    <location>
        <position position="136"/>
    </location>
    <ligand>
        <name>ATP</name>
        <dbReference type="ChEBI" id="CHEBI:30616"/>
    </ligand>
</feature>
<feature type="site" description="Interaction with tRNA" evidence="1">
    <location>
        <position position="137"/>
    </location>
</feature>
<feature type="site" description="Interaction with tRNA" evidence="1">
    <location>
        <position position="356"/>
    </location>
</feature>
<feature type="disulfide bond" description="Alternate" evidence="1">
    <location>
        <begin position="112"/>
        <end position="213"/>
    </location>
</feature>
<reference key="1">
    <citation type="journal article" date="2009" name="J. Bacteriol.">
        <title>Genome sequences of three Agrobacterium biovars help elucidate the evolution of multichromosome genomes in bacteria.</title>
        <authorList>
            <person name="Slater S.C."/>
            <person name="Goldman B.S."/>
            <person name="Goodner B."/>
            <person name="Setubal J.C."/>
            <person name="Farrand S.K."/>
            <person name="Nester E.W."/>
            <person name="Burr T.J."/>
            <person name="Banta L."/>
            <person name="Dickerman A.W."/>
            <person name="Paulsen I."/>
            <person name="Otten L."/>
            <person name="Suen G."/>
            <person name="Welch R."/>
            <person name="Almeida N.F."/>
            <person name="Arnold F."/>
            <person name="Burton O.T."/>
            <person name="Du Z."/>
            <person name="Ewing A."/>
            <person name="Godsy E."/>
            <person name="Heisel S."/>
            <person name="Houmiel K.L."/>
            <person name="Jhaveri J."/>
            <person name="Lu J."/>
            <person name="Miller N.M."/>
            <person name="Norton S."/>
            <person name="Chen Q."/>
            <person name="Phoolcharoen W."/>
            <person name="Ohlin V."/>
            <person name="Ondrusek D."/>
            <person name="Pride N."/>
            <person name="Stricklin S.L."/>
            <person name="Sun J."/>
            <person name="Wheeler C."/>
            <person name="Wilson L."/>
            <person name="Zhu H."/>
            <person name="Wood D.W."/>
        </authorList>
    </citation>
    <scope>NUCLEOTIDE SEQUENCE [LARGE SCALE GENOMIC DNA]</scope>
    <source>
        <strain>K84 / ATCC BAA-868</strain>
    </source>
</reference>
<keyword id="KW-0067">ATP-binding</keyword>
<keyword id="KW-0963">Cytoplasm</keyword>
<keyword id="KW-1015">Disulfide bond</keyword>
<keyword id="KW-0547">Nucleotide-binding</keyword>
<keyword id="KW-0694">RNA-binding</keyword>
<keyword id="KW-0808">Transferase</keyword>
<keyword id="KW-0819">tRNA processing</keyword>
<keyword id="KW-0820">tRNA-binding</keyword>
<gene>
    <name evidence="1" type="primary">mnmA</name>
    <name type="ordered locus">Arad_3657</name>
</gene>